<name>PBPA_RICTY</name>
<comment type="function">
    <text evidence="1">Cell wall formation. Synthesis of cross-linked peptidoglycan from the lipid intermediates. The enzyme has a penicillin-insensitive transglycosylase N-terminal domain (formation of linear glycan strands) and a penicillin-sensitive transpeptidase C-terminal domain (cross-linking of the peptide subunits).</text>
</comment>
<comment type="catalytic activity">
    <reaction evidence="2">
        <text>[GlcNAc-(1-&gt;4)-Mur2Ac(oyl-L-Ala-gamma-D-Glu-L-Lys-D-Ala-D-Ala)](n)-di-trans,octa-cis-undecaprenyl diphosphate + beta-D-GlcNAc-(1-&gt;4)-Mur2Ac(oyl-L-Ala-gamma-D-Glu-L-Lys-D-Ala-D-Ala)-di-trans,octa-cis-undecaprenyl diphosphate = [GlcNAc-(1-&gt;4)-Mur2Ac(oyl-L-Ala-gamma-D-Glu-L-Lys-D-Ala-D-Ala)](n+1)-di-trans,octa-cis-undecaprenyl diphosphate + di-trans,octa-cis-undecaprenyl diphosphate + H(+)</text>
        <dbReference type="Rhea" id="RHEA:23708"/>
        <dbReference type="Rhea" id="RHEA-COMP:9602"/>
        <dbReference type="Rhea" id="RHEA-COMP:9603"/>
        <dbReference type="ChEBI" id="CHEBI:15378"/>
        <dbReference type="ChEBI" id="CHEBI:58405"/>
        <dbReference type="ChEBI" id="CHEBI:60033"/>
        <dbReference type="ChEBI" id="CHEBI:78435"/>
        <dbReference type="EC" id="2.4.99.28"/>
    </reaction>
</comment>
<comment type="catalytic activity">
    <reaction evidence="2">
        <text>Preferential cleavage: (Ac)2-L-Lys-D-Ala-|-D-Ala. Also transpeptidation of peptidyl-alanyl moieties that are N-acyl substituents of D-alanine.</text>
        <dbReference type="EC" id="3.4.16.4"/>
    </reaction>
</comment>
<comment type="pathway">
    <text>Cell wall biogenesis; peptidoglycan biosynthesis.</text>
</comment>
<comment type="subcellular location">
    <subcellularLocation>
        <location evidence="1">Cell inner membrane</location>
        <topology evidence="1">Single-pass type II membrane protein</topology>
    </subcellularLocation>
</comment>
<comment type="similarity">
    <text evidence="5">In the N-terminal section; belongs to the glycosyltransferase 51 family.</text>
</comment>
<comment type="similarity">
    <text evidence="5">In the C-terminal section; belongs to the transpeptidase family.</text>
</comment>
<sequence length="785" mass="88677">MYKSLFFFLKIFAILILLGCSVTAYIIYHYSHDLPDYSQLVRYYPPSVTRIYSRDGKLMEEYAFERRVFVPINNVPSSLIESFIAAEDKNFYNHPGIDLLGIVRAAFLNISNYLHNRRMEGASTITQQVVKNFLLTNEVSLERKIKEVIISYMISRVFTKHQILELYLNQTFFGRGAYGVAAAAQNYFNKSIEELTIAESAFIAALPKAPSELNPDKNYSRVKARRDYVIERMFEDGYITRDTMKEAIGSPIVLRKRAKEETVTADYYAAQVREEVIKMLNSKEEFYRGGLTIITSLDAQMQKLAENALRKGLREFDRRHGFRKPIANIPLDHWQEALKNIPTPSSLLEYKLAVVLDVSDNHAKIGLIDGSKARIPIIEMQWARSNLKSVKTLLKKGDVIVVEPIKDCYALRQIPEINGAIMVMNPHTGQVLASVGGYDFSTSKFDRVTQALRQPGSLTKTFVYLAALENGVKPNQIFNDGPIEIMQGPGMPSWRPKNYEGQFLGEMTMRTGFEKSRNLITVRVATAVGLTKIVDIIKRFGINNEPKKVYSMVLGSIETTLSRITNAYAIIANGGKKVEPHFIELIKDRNGKIIYRRDNRECFSCNILDSDLDTAILEIPKEDIYRVTDEASDYQITSFLTGAIDSGTGYAARKLGKIIAGKTGTSNDSKDTWFIGFTPKIVVGSYVGYDTPKELGKKATGSNVVLPIFIDFMNHAYKDEPSLPFKVPDSIKLIAVDRITGKMIPDGTVIEAFKVNNIQMLENDYMIDNHDIFIPGISDQSQEIY</sequence>
<organism>
    <name type="scientific">Rickettsia typhi (strain ATCC VR-144 / Wilmington)</name>
    <dbReference type="NCBI Taxonomy" id="257363"/>
    <lineage>
        <taxon>Bacteria</taxon>
        <taxon>Pseudomonadati</taxon>
        <taxon>Pseudomonadota</taxon>
        <taxon>Alphaproteobacteria</taxon>
        <taxon>Rickettsiales</taxon>
        <taxon>Rickettsiaceae</taxon>
        <taxon>Rickettsieae</taxon>
        <taxon>Rickettsia</taxon>
        <taxon>typhus group</taxon>
    </lineage>
</organism>
<dbReference type="EC" id="2.4.99.28" evidence="2"/>
<dbReference type="EC" id="3.4.16.4" evidence="2"/>
<dbReference type="EMBL" id="AE017197">
    <property type="protein sequence ID" value="AAU04250.1"/>
    <property type="molecule type" value="Genomic_DNA"/>
</dbReference>
<dbReference type="RefSeq" id="WP_011191225.1">
    <property type="nucleotide sequence ID" value="NC_006142.1"/>
</dbReference>
<dbReference type="SMR" id="Q68VU2"/>
<dbReference type="CAZy" id="GT51">
    <property type="family name" value="Glycosyltransferase Family 51"/>
</dbReference>
<dbReference type="KEGG" id="rty:RT0794"/>
<dbReference type="eggNOG" id="COG5009">
    <property type="taxonomic scope" value="Bacteria"/>
</dbReference>
<dbReference type="HOGENOM" id="CLU_006354_2_4_5"/>
<dbReference type="OrthoDB" id="9766909at2"/>
<dbReference type="UniPathway" id="UPA00219"/>
<dbReference type="Proteomes" id="UP000000604">
    <property type="component" value="Chromosome"/>
</dbReference>
<dbReference type="GO" id="GO:0030288">
    <property type="term" value="C:outer membrane-bounded periplasmic space"/>
    <property type="evidence" value="ECO:0007669"/>
    <property type="project" value="TreeGrafter"/>
</dbReference>
<dbReference type="GO" id="GO:0005886">
    <property type="term" value="C:plasma membrane"/>
    <property type="evidence" value="ECO:0007669"/>
    <property type="project" value="UniProtKB-SubCell"/>
</dbReference>
<dbReference type="GO" id="GO:0008658">
    <property type="term" value="F:penicillin binding"/>
    <property type="evidence" value="ECO:0007669"/>
    <property type="project" value="InterPro"/>
</dbReference>
<dbReference type="GO" id="GO:0008955">
    <property type="term" value="F:peptidoglycan glycosyltransferase activity"/>
    <property type="evidence" value="ECO:0007669"/>
    <property type="project" value="RHEA"/>
</dbReference>
<dbReference type="GO" id="GO:0009002">
    <property type="term" value="F:serine-type D-Ala-D-Ala carboxypeptidase activity"/>
    <property type="evidence" value="ECO:0007669"/>
    <property type="project" value="UniProtKB-EC"/>
</dbReference>
<dbReference type="GO" id="GO:0071555">
    <property type="term" value="P:cell wall organization"/>
    <property type="evidence" value="ECO:0007669"/>
    <property type="project" value="UniProtKB-KW"/>
</dbReference>
<dbReference type="GO" id="GO:0009252">
    <property type="term" value="P:peptidoglycan biosynthetic process"/>
    <property type="evidence" value="ECO:0007669"/>
    <property type="project" value="UniProtKB-UniPathway"/>
</dbReference>
<dbReference type="GO" id="GO:0006508">
    <property type="term" value="P:proteolysis"/>
    <property type="evidence" value="ECO:0007669"/>
    <property type="project" value="UniProtKB-KW"/>
</dbReference>
<dbReference type="GO" id="GO:0008360">
    <property type="term" value="P:regulation of cell shape"/>
    <property type="evidence" value="ECO:0007669"/>
    <property type="project" value="UniProtKB-KW"/>
</dbReference>
<dbReference type="GO" id="GO:0046677">
    <property type="term" value="P:response to antibiotic"/>
    <property type="evidence" value="ECO:0007669"/>
    <property type="project" value="UniProtKB-KW"/>
</dbReference>
<dbReference type="FunFam" id="1.10.3810.10:FF:000003">
    <property type="entry name" value="Penicillin-binding protein 1a"/>
    <property type="match status" value="1"/>
</dbReference>
<dbReference type="Gene3D" id="1.10.3810.10">
    <property type="entry name" value="Biosynthetic peptidoglycan transglycosylase-like"/>
    <property type="match status" value="1"/>
</dbReference>
<dbReference type="Gene3D" id="3.40.710.10">
    <property type="entry name" value="DD-peptidase/beta-lactamase superfamily"/>
    <property type="match status" value="2"/>
</dbReference>
<dbReference type="InterPro" id="IPR012338">
    <property type="entry name" value="Beta-lactam/transpept-like"/>
</dbReference>
<dbReference type="InterPro" id="IPR001264">
    <property type="entry name" value="Glyco_trans_51"/>
</dbReference>
<dbReference type="InterPro" id="IPR050396">
    <property type="entry name" value="Glycosyltr_51/Transpeptidase"/>
</dbReference>
<dbReference type="InterPro" id="IPR023346">
    <property type="entry name" value="Lysozyme-like_dom_sf"/>
</dbReference>
<dbReference type="InterPro" id="IPR036950">
    <property type="entry name" value="PBP_transglycosylase"/>
</dbReference>
<dbReference type="InterPro" id="IPR031376">
    <property type="entry name" value="PCB_OB"/>
</dbReference>
<dbReference type="InterPro" id="IPR001460">
    <property type="entry name" value="PCN-bd_Tpept"/>
</dbReference>
<dbReference type="NCBIfam" id="TIGR02074">
    <property type="entry name" value="PBP_1a_fam"/>
    <property type="match status" value="1"/>
</dbReference>
<dbReference type="PANTHER" id="PTHR32282">
    <property type="entry name" value="BINDING PROTEIN TRANSPEPTIDASE, PUTATIVE-RELATED"/>
    <property type="match status" value="1"/>
</dbReference>
<dbReference type="PANTHER" id="PTHR32282:SF27">
    <property type="entry name" value="PENICILLIN-BINDING PROTEIN 1A"/>
    <property type="match status" value="1"/>
</dbReference>
<dbReference type="Pfam" id="PF17092">
    <property type="entry name" value="PCB_OB"/>
    <property type="match status" value="1"/>
</dbReference>
<dbReference type="Pfam" id="PF00912">
    <property type="entry name" value="Transgly"/>
    <property type="match status" value="1"/>
</dbReference>
<dbReference type="Pfam" id="PF00905">
    <property type="entry name" value="Transpeptidase"/>
    <property type="match status" value="1"/>
</dbReference>
<dbReference type="SUPFAM" id="SSF56601">
    <property type="entry name" value="beta-lactamase/transpeptidase-like"/>
    <property type="match status" value="1"/>
</dbReference>
<dbReference type="SUPFAM" id="SSF53955">
    <property type="entry name" value="Lysozyme-like"/>
    <property type="match status" value="1"/>
</dbReference>
<reference key="1">
    <citation type="journal article" date="2004" name="J. Bacteriol.">
        <title>Complete genome sequence of Rickettsia typhi and comparison with sequences of other Rickettsiae.</title>
        <authorList>
            <person name="McLeod M.P."/>
            <person name="Qin X."/>
            <person name="Karpathy S.E."/>
            <person name="Gioia J."/>
            <person name="Highlander S.K."/>
            <person name="Fox G.E."/>
            <person name="McNeill T.Z."/>
            <person name="Jiang H."/>
            <person name="Muzny D."/>
            <person name="Jacob L.S."/>
            <person name="Hawes A.C."/>
            <person name="Sodergren E."/>
            <person name="Gill R."/>
            <person name="Hume J."/>
            <person name="Morgan M."/>
            <person name="Fan G."/>
            <person name="Amin A.G."/>
            <person name="Gibbs R.A."/>
            <person name="Hong C."/>
            <person name="Yu X.-J."/>
            <person name="Walker D.H."/>
            <person name="Weinstock G.M."/>
        </authorList>
    </citation>
    <scope>NUCLEOTIDE SEQUENCE [LARGE SCALE GENOMIC DNA]</scope>
    <source>
        <strain>ATCC VR-144 / Wilmington</strain>
    </source>
</reference>
<protein>
    <recommendedName>
        <fullName>Penicillin-binding protein 1A</fullName>
        <shortName>PBP-1a</shortName>
        <shortName>PBP1a</shortName>
    </recommendedName>
    <domain>
        <recommendedName>
            <fullName>Penicillin-insensitive transglycosylase</fullName>
            <ecNumber evidence="2">2.4.99.28</ecNumber>
        </recommendedName>
        <alternativeName>
            <fullName>Peptidoglycan TGase</fullName>
        </alternativeName>
    </domain>
    <domain>
        <recommendedName>
            <fullName>Penicillin-sensitive transpeptidase</fullName>
            <ecNumber evidence="2">3.4.16.4</ecNumber>
        </recommendedName>
        <alternativeName>
            <fullName>DD-transpeptidase</fullName>
        </alternativeName>
    </domain>
</protein>
<evidence type="ECO:0000250" key="1"/>
<evidence type="ECO:0000250" key="2">
    <source>
        <dbReference type="UniProtKB" id="P02918"/>
    </source>
</evidence>
<evidence type="ECO:0000250" key="3">
    <source>
        <dbReference type="UniProtKB" id="P02919"/>
    </source>
</evidence>
<evidence type="ECO:0000255" key="4"/>
<evidence type="ECO:0000305" key="5"/>
<feature type="chain" id="PRO_0000286453" description="Penicillin-binding protein 1A">
    <location>
        <begin position="1"/>
        <end position="785"/>
    </location>
</feature>
<feature type="topological domain" description="Cytoplasmic" evidence="4">
    <location>
        <begin position="1"/>
        <end position="6"/>
    </location>
</feature>
<feature type="transmembrane region" description="Helical; Signal-anchor for type II membrane protein" evidence="4">
    <location>
        <begin position="7"/>
        <end position="27"/>
    </location>
</feature>
<feature type="topological domain" description="Periplasmic" evidence="4">
    <location>
        <begin position="28"/>
        <end position="785"/>
    </location>
</feature>
<feature type="region of interest" description="Transglycosylase">
    <location>
        <begin position="49"/>
        <end position="220"/>
    </location>
</feature>
<feature type="region of interest" description="Transpeptidase">
    <location>
        <begin position="398"/>
        <end position="711"/>
    </location>
</feature>
<feature type="active site" description="Proton donor; for transglycosylase activity" evidence="3">
    <location>
        <position position="87"/>
    </location>
</feature>
<feature type="active site" description="Acyl-ester intermediate; for transpeptidase activity" evidence="3">
    <location>
        <position position="457"/>
    </location>
</feature>
<proteinExistence type="inferred from homology"/>
<accession>Q68VU2</accession>
<keyword id="KW-0046">Antibiotic resistance</keyword>
<keyword id="KW-0121">Carboxypeptidase</keyword>
<keyword id="KW-0997">Cell inner membrane</keyword>
<keyword id="KW-1003">Cell membrane</keyword>
<keyword id="KW-0133">Cell shape</keyword>
<keyword id="KW-0961">Cell wall biogenesis/degradation</keyword>
<keyword id="KW-0328">Glycosyltransferase</keyword>
<keyword id="KW-0378">Hydrolase</keyword>
<keyword id="KW-0472">Membrane</keyword>
<keyword id="KW-0511">Multifunctional enzyme</keyword>
<keyword id="KW-0573">Peptidoglycan synthesis</keyword>
<keyword id="KW-0645">Protease</keyword>
<keyword id="KW-0735">Signal-anchor</keyword>
<keyword id="KW-0808">Transferase</keyword>
<keyword id="KW-0812">Transmembrane</keyword>
<keyword id="KW-1133">Transmembrane helix</keyword>
<gene>
    <name type="primary">mrcA</name>
    <name type="synonym">ponA</name>
    <name type="ordered locus">RT0794</name>
</gene>